<gene>
    <name evidence="1" type="primary">secA</name>
    <name type="ordered locus">PputW619_0952</name>
</gene>
<sequence>MFAPLLKKLFGSKNEREVKRMLKTVNIVNAFEEKMVALSDEQLRAKTAEFKERLAKGETLDQLLPEAFAVAREAGKRVMGMRHFDVQLIGGMTLHEGMIAEMRTGEGKTLVGTLAVYLNALSGKGVHVVTVNDYLARRDANWMRPLYEFLGLSVGIVSAFQPPEEKRAAYASDITYGTNNEFGFDYLRDNMAFSLEEKFQRELNFAVIDEVDSILIDEARTPLIISGQAEDSSKLYIEINRLIPRLTQHIEEVEGQVTQEGHFTIDEKSRQVELNEAGHQFIEEMLTQSGLLAEGESLYSSHNLGLLTHVYAGLRAHKLFHRNVEYIVQDGQVLLIDEHTGRTMPGRRLSEGLHQAIEAKENLNIQAESQTLASTTFQNYFRLYTKLSGMTGTADTEAFEFQSIYGLNVMVIPPNKPLARKDFNDLVYLTADEKYAAIIADIKESMTQGRPVLVGTATIETSEHMSNLLKQEGIEHKVLNAKYHEKEAEIIAQAGAPGALTIATNMAGRGTDILLGGNWEAEVAALENPSPEQIAQIKADWQKRHQQVIESGGLHVIASERHESRRIDNQLRGRSGRQGDPGSSRFYLSLEDSLMRIFASDRVKNFMKALGMQSGEAIEHRMVTNAIEKAQRKVEGRNFDIRKQLLEYDDVANEQRKVIYHMRNSLLAAENIGDTIAEFRQEVLDATINQHIPPQSLPEQWDVAGLEASLASDFAIKLPIQQWLDEDDHLYEETLREKLLKEITDAYNEKEDQAGIDALRTFEKQILLRVLDDLWKDHLSTMDHLRHGIHLRGYAQKNPKQEYKRESFTLFQELLESIKRDTIRVLSHVQVRREDPVEEEARLRREAEELASRMQFQHAPAPGLESEQLSEEGAEVAVAVAPVRNDQKLGRNEPCWCGSGKKFKHCHGQIE</sequence>
<keyword id="KW-0067">ATP-binding</keyword>
<keyword id="KW-0997">Cell inner membrane</keyword>
<keyword id="KW-1003">Cell membrane</keyword>
<keyword id="KW-0963">Cytoplasm</keyword>
<keyword id="KW-0472">Membrane</keyword>
<keyword id="KW-0479">Metal-binding</keyword>
<keyword id="KW-0547">Nucleotide-binding</keyword>
<keyword id="KW-0653">Protein transport</keyword>
<keyword id="KW-1278">Translocase</keyword>
<keyword id="KW-0811">Translocation</keyword>
<keyword id="KW-0813">Transport</keyword>
<keyword id="KW-0862">Zinc</keyword>
<accession>B1J3I9</accession>
<dbReference type="EC" id="7.4.2.8" evidence="1"/>
<dbReference type="EMBL" id="CP000949">
    <property type="protein sequence ID" value="ACA71457.1"/>
    <property type="molecule type" value="Genomic_DNA"/>
</dbReference>
<dbReference type="SMR" id="B1J3I9"/>
<dbReference type="STRING" id="390235.PputW619_0952"/>
<dbReference type="KEGG" id="ppw:PputW619_0952"/>
<dbReference type="eggNOG" id="COG0653">
    <property type="taxonomic scope" value="Bacteria"/>
</dbReference>
<dbReference type="HOGENOM" id="CLU_005314_3_0_6"/>
<dbReference type="OrthoDB" id="9805579at2"/>
<dbReference type="GO" id="GO:0031522">
    <property type="term" value="C:cell envelope Sec protein transport complex"/>
    <property type="evidence" value="ECO:0007669"/>
    <property type="project" value="TreeGrafter"/>
</dbReference>
<dbReference type="GO" id="GO:0005829">
    <property type="term" value="C:cytosol"/>
    <property type="evidence" value="ECO:0007669"/>
    <property type="project" value="TreeGrafter"/>
</dbReference>
<dbReference type="GO" id="GO:0005886">
    <property type="term" value="C:plasma membrane"/>
    <property type="evidence" value="ECO:0007669"/>
    <property type="project" value="UniProtKB-SubCell"/>
</dbReference>
<dbReference type="GO" id="GO:0005524">
    <property type="term" value="F:ATP binding"/>
    <property type="evidence" value="ECO:0007669"/>
    <property type="project" value="UniProtKB-UniRule"/>
</dbReference>
<dbReference type="GO" id="GO:0046872">
    <property type="term" value="F:metal ion binding"/>
    <property type="evidence" value="ECO:0007669"/>
    <property type="project" value="UniProtKB-KW"/>
</dbReference>
<dbReference type="GO" id="GO:0008564">
    <property type="term" value="F:protein-exporting ATPase activity"/>
    <property type="evidence" value="ECO:0007669"/>
    <property type="project" value="UniProtKB-EC"/>
</dbReference>
<dbReference type="GO" id="GO:0065002">
    <property type="term" value="P:intracellular protein transmembrane transport"/>
    <property type="evidence" value="ECO:0007669"/>
    <property type="project" value="UniProtKB-UniRule"/>
</dbReference>
<dbReference type="GO" id="GO:0017038">
    <property type="term" value="P:protein import"/>
    <property type="evidence" value="ECO:0007669"/>
    <property type="project" value="InterPro"/>
</dbReference>
<dbReference type="GO" id="GO:0006605">
    <property type="term" value="P:protein targeting"/>
    <property type="evidence" value="ECO:0007669"/>
    <property type="project" value="UniProtKB-UniRule"/>
</dbReference>
<dbReference type="GO" id="GO:0043952">
    <property type="term" value="P:protein transport by the Sec complex"/>
    <property type="evidence" value="ECO:0007669"/>
    <property type="project" value="TreeGrafter"/>
</dbReference>
<dbReference type="CDD" id="cd17928">
    <property type="entry name" value="DEXDc_SecA"/>
    <property type="match status" value="1"/>
</dbReference>
<dbReference type="CDD" id="cd18803">
    <property type="entry name" value="SF2_C_secA"/>
    <property type="match status" value="1"/>
</dbReference>
<dbReference type="FunFam" id="3.40.50.300:FF:000081">
    <property type="entry name" value="Preprotein translocase subunit SecA"/>
    <property type="match status" value="1"/>
</dbReference>
<dbReference type="FunFam" id="3.40.50.300:FF:000113">
    <property type="entry name" value="Preprotein translocase subunit SecA"/>
    <property type="match status" value="1"/>
</dbReference>
<dbReference type="FunFam" id="3.90.1440.10:FF:000001">
    <property type="entry name" value="Preprotein translocase subunit SecA"/>
    <property type="match status" value="1"/>
</dbReference>
<dbReference type="FunFam" id="1.10.3060.10:FF:000003">
    <property type="entry name" value="Protein translocase subunit SecA"/>
    <property type="match status" value="1"/>
</dbReference>
<dbReference type="Gene3D" id="1.10.3060.10">
    <property type="entry name" value="Helical scaffold and wing domains of SecA"/>
    <property type="match status" value="1"/>
</dbReference>
<dbReference type="Gene3D" id="3.40.50.300">
    <property type="entry name" value="P-loop containing nucleotide triphosphate hydrolases"/>
    <property type="match status" value="2"/>
</dbReference>
<dbReference type="Gene3D" id="3.90.1440.10">
    <property type="entry name" value="SecA, preprotein cross-linking domain"/>
    <property type="match status" value="1"/>
</dbReference>
<dbReference type="HAMAP" id="MF_01382">
    <property type="entry name" value="SecA"/>
    <property type="match status" value="1"/>
</dbReference>
<dbReference type="InterPro" id="IPR014001">
    <property type="entry name" value="Helicase_ATP-bd"/>
</dbReference>
<dbReference type="InterPro" id="IPR001650">
    <property type="entry name" value="Helicase_C-like"/>
</dbReference>
<dbReference type="InterPro" id="IPR027417">
    <property type="entry name" value="P-loop_NTPase"/>
</dbReference>
<dbReference type="InterPro" id="IPR004027">
    <property type="entry name" value="SEC_C_motif"/>
</dbReference>
<dbReference type="InterPro" id="IPR000185">
    <property type="entry name" value="SecA"/>
</dbReference>
<dbReference type="InterPro" id="IPR011115">
    <property type="entry name" value="SecA_DEAD"/>
</dbReference>
<dbReference type="InterPro" id="IPR014018">
    <property type="entry name" value="SecA_motor_DEAD"/>
</dbReference>
<dbReference type="InterPro" id="IPR011130">
    <property type="entry name" value="SecA_preprotein_X-link_dom"/>
</dbReference>
<dbReference type="InterPro" id="IPR044722">
    <property type="entry name" value="SecA_SF2_C"/>
</dbReference>
<dbReference type="InterPro" id="IPR011116">
    <property type="entry name" value="SecA_Wing/Scaffold"/>
</dbReference>
<dbReference type="InterPro" id="IPR036266">
    <property type="entry name" value="SecA_Wing/Scaffold_sf"/>
</dbReference>
<dbReference type="InterPro" id="IPR036670">
    <property type="entry name" value="SecA_X-link_sf"/>
</dbReference>
<dbReference type="NCBIfam" id="NF009538">
    <property type="entry name" value="PRK12904.1"/>
    <property type="match status" value="1"/>
</dbReference>
<dbReference type="NCBIfam" id="TIGR00963">
    <property type="entry name" value="secA"/>
    <property type="match status" value="1"/>
</dbReference>
<dbReference type="PANTHER" id="PTHR30612:SF0">
    <property type="entry name" value="CHLOROPLAST PROTEIN-TRANSPORTING ATPASE"/>
    <property type="match status" value="1"/>
</dbReference>
<dbReference type="PANTHER" id="PTHR30612">
    <property type="entry name" value="SECA INNER MEMBRANE COMPONENT OF SEC PROTEIN SECRETION SYSTEM"/>
    <property type="match status" value="1"/>
</dbReference>
<dbReference type="Pfam" id="PF21090">
    <property type="entry name" value="P-loop_SecA"/>
    <property type="match status" value="1"/>
</dbReference>
<dbReference type="Pfam" id="PF02810">
    <property type="entry name" value="SEC-C"/>
    <property type="match status" value="1"/>
</dbReference>
<dbReference type="Pfam" id="PF07517">
    <property type="entry name" value="SecA_DEAD"/>
    <property type="match status" value="1"/>
</dbReference>
<dbReference type="Pfam" id="PF01043">
    <property type="entry name" value="SecA_PP_bind"/>
    <property type="match status" value="1"/>
</dbReference>
<dbReference type="Pfam" id="PF07516">
    <property type="entry name" value="SecA_SW"/>
    <property type="match status" value="1"/>
</dbReference>
<dbReference type="PRINTS" id="PR00906">
    <property type="entry name" value="SECA"/>
</dbReference>
<dbReference type="SMART" id="SM00957">
    <property type="entry name" value="SecA_DEAD"/>
    <property type="match status" value="1"/>
</dbReference>
<dbReference type="SMART" id="SM00958">
    <property type="entry name" value="SecA_PP_bind"/>
    <property type="match status" value="1"/>
</dbReference>
<dbReference type="SUPFAM" id="SSF81886">
    <property type="entry name" value="Helical scaffold and wing domains of SecA"/>
    <property type="match status" value="1"/>
</dbReference>
<dbReference type="SUPFAM" id="SSF52540">
    <property type="entry name" value="P-loop containing nucleoside triphosphate hydrolases"/>
    <property type="match status" value="2"/>
</dbReference>
<dbReference type="SUPFAM" id="SSF81767">
    <property type="entry name" value="Pre-protein crosslinking domain of SecA"/>
    <property type="match status" value="1"/>
</dbReference>
<dbReference type="PROSITE" id="PS51196">
    <property type="entry name" value="SECA_MOTOR_DEAD"/>
    <property type="match status" value="1"/>
</dbReference>
<proteinExistence type="inferred from homology"/>
<comment type="function">
    <text evidence="1">Part of the Sec protein translocase complex. Interacts with the SecYEG preprotein conducting channel. Has a central role in coupling the hydrolysis of ATP to the transfer of proteins into and across the cell membrane, serving both as a receptor for the preprotein-SecB complex and as an ATP-driven molecular motor driving the stepwise translocation of polypeptide chains across the membrane.</text>
</comment>
<comment type="catalytic activity">
    <reaction evidence="1">
        <text>ATP + H2O + cellular proteinSide 1 = ADP + phosphate + cellular proteinSide 2.</text>
        <dbReference type="EC" id="7.4.2.8"/>
    </reaction>
</comment>
<comment type="cofactor">
    <cofactor evidence="1">
        <name>Zn(2+)</name>
        <dbReference type="ChEBI" id="CHEBI:29105"/>
    </cofactor>
    <text evidence="1">May bind 1 zinc ion per subunit.</text>
</comment>
<comment type="subunit">
    <text evidence="1">Monomer and homodimer. Part of the essential Sec protein translocation apparatus which comprises SecA, SecYEG and auxiliary proteins SecDF-YajC and YidC.</text>
</comment>
<comment type="subcellular location">
    <subcellularLocation>
        <location evidence="1">Cell inner membrane</location>
        <topology evidence="1">Peripheral membrane protein</topology>
        <orientation evidence="1">Cytoplasmic side</orientation>
    </subcellularLocation>
    <subcellularLocation>
        <location evidence="1">Cytoplasm</location>
    </subcellularLocation>
    <text evidence="1">Distribution is 50-50.</text>
</comment>
<comment type="similarity">
    <text evidence="1">Belongs to the SecA family.</text>
</comment>
<evidence type="ECO:0000255" key="1">
    <source>
        <dbReference type="HAMAP-Rule" id="MF_01382"/>
    </source>
</evidence>
<evidence type="ECO:0000256" key="2">
    <source>
        <dbReference type="SAM" id="MobiDB-lite"/>
    </source>
</evidence>
<feature type="chain" id="PRO_1000145047" description="Protein translocase subunit SecA">
    <location>
        <begin position="1"/>
        <end position="911"/>
    </location>
</feature>
<feature type="region of interest" description="Disordered" evidence="2">
    <location>
        <begin position="561"/>
        <end position="583"/>
    </location>
</feature>
<feature type="compositionally biased region" description="Basic and acidic residues" evidence="2">
    <location>
        <begin position="561"/>
        <end position="571"/>
    </location>
</feature>
<feature type="binding site" evidence="1">
    <location>
        <position position="87"/>
    </location>
    <ligand>
        <name>ATP</name>
        <dbReference type="ChEBI" id="CHEBI:30616"/>
    </ligand>
</feature>
<feature type="binding site" evidence="1">
    <location>
        <begin position="105"/>
        <end position="109"/>
    </location>
    <ligand>
        <name>ATP</name>
        <dbReference type="ChEBI" id="CHEBI:30616"/>
    </ligand>
</feature>
<feature type="binding site" evidence="1">
    <location>
        <position position="512"/>
    </location>
    <ligand>
        <name>ATP</name>
        <dbReference type="ChEBI" id="CHEBI:30616"/>
    </ligand>
</feature>
<feature type="binding site" evidence="1">
    <location>
        <position position="895"/>
    </location>
    <ligand>
        <name>Zn(2+)</name>
        <dbReference type="ChEBI" id="CHEBI:29105"/>
    </ligand>
</feature>
<feature type="binding site" evidence="1">
    <location>
        <position position="897"/>
    </location>
    <ligand>
        <name>Zn(2+)</name>
        <dbReference type="ChEBI" id="CHEBI:29105"/>
    </ligand>
</feature>
<feature type="binding site" evidence="1">
    <location>
        <position position="906"/>
    </location>
    <ligand>
        <name>Zn(2+)</name>
        <dbReference type="ChEBI" id="CHEBI:29105"/>
    </ligand>
</feature>
<feature type="binding site" evidence="1">
    <location>
        <position position="907"/>
    </location>
    <ligand>
        <name>Zn(2+)</name>
        <dbReference type="ChEBI" id="CHEBI:29105"/>
    </ligand>
</feature>
<reference key="1">
    <citation type="submission" date="2008-02" db="EMBL/GenBank/DDBJ databases">
        <title>Complete sequence of Pseudomonas putida W619.</title>
        <authorList>
            <person name="Copeland A."/>
            <person name="Lucas S."/>
            <person name="Lapidus A."/>
            <person name="Barry K."/>
            <person name="Detter J.C."/>
            <person name="Glavina del Rio T."/>
            <person name="Dalin E."/>
            <person name="Tice H."/>
            <person name="Pitluck S."/>
            <person name="Chain P."/>
            <person name="Malfatti S."/>
            <person name="Shin M."/>
            <person name="Vergez L."/>
            <person name="Schmutz J."/>
            <person name="Larimer F."/>
            <person name="Land M."/>
            <person name="Hauser L."/>
            <person name="Kyrpides N."/>
            <person name="Kim E."/>
            <person name="Taghavi S."/>
            <person name="Vangronsveld D."/>
            <person name="van der Lelie D."/>
            <person name="Richardson P."/>
        </authorList>
    </citation>
    <scope>NUCLEOTIDE SEQUENCE [LARGE SCALE GENOMIC DNA]</scope>
    <source>
        <strain>W619</strain>
    </source>
</reference>
<organism>
    <name type="scientific">Pseudomonas putida (strain W619)</name>
    <dbReference type="NCBI Taxonomy" id="390235"/>
    <lineage>
        <taxon>Bacteria</taxon>
        <taxon>Pseudomonadati</taxon>
        <taxon>Pseudomonadota</taxon>
        <taxon>Gammaproteobacteria</taxon>
        <taxon>Pseudomonadales</taxon>
        <taxon>Pseudomonadaceae</taxon>
        <taxon>Pseudomonas</taxon>
    </lineage>
</organism>
<name>SECA_PSEPW</name>
<protein>
    <recommendedName>
        <fullName evidence="1">Protein translocase subunit SecA</fullName>
        <ecNumber evidence="1">7.4.2.8</ecNumber>
    </recommendedName>
</protein>